<evidence type="ECO:0000250" key="1">
    <source>
        <dbReference type="UniProtKB" id="A0A2L1DGG0"/>
    </source>
</evidence>
<evidence type="ECO:0000255" key="2"/>
<evidence type="ECO:0000303" key="3">
    <source>
    </source>
</evidence>
<evidence type="ECO:0000305" key="4"/>
<accession>P0DUG9</accession>
<protein>
    <recommendedName>
        <fullName evidence="3">Peptide HSTX-VI</fullName>
    </recommendedName>
</protein>
<name>HSTX6_HAESL</name>
<sequence length="48" mass="5310">MRTLLVFLLLAILVAVLIGNIQVEACKDLTECSPYKLCIKGICERMIG</sequence>
<reference key="1">
    <citation type="journal article" date="2018" name="Front. Pharmacol.">
        <title>Novel sodium channel inhibitor from leeches.</title>
        <authorList>
            <person name="Wang G."/>
            <person name="Long C."/>
            <person name="Liu W."/>
            <person name="Xu C."/>
            <person name="Zhang M."/>
            <person name="Li Q."/>
            <person name="Lu Q."/>
            <person name="Meng P."/>
            <person name="Li D."/>
            <person name="Rong M."/>
            <person name="Sun Z."/>
            <person name="Luo X."/>
            <person name="Lai R."/>
        </authorList>
    </citation>
    <scope>NUCLEOTIDE SEQUENCE [MRNA]</scope>
    <source>
        <tissue>Salivary gland</tissue>
    </source>
</reference>
<feature type="signal peptide" evidence="2">
    <location>
        <begin position="1"/>
        <end position="21"/>
    </location>
</feature>
<feature type="propeptide" id="PRO_0000452224" evidence="1">
    <location>
        <begin position="22"/>
        <end position="27"/>
    </location>
</feature>
<feature type="peptide" id="PRO_0000452225" description="Peptide HSTX-VI" evidence="1">
    <location>
        <begin position="25"/>
        <end position="47"/>
    </location>
</feature>
<feature type="modified residue" description="Isoleucine amide" evidence="1">
    <location>
        <position position="47"/>
    </location>
</feature>
<feature type="disulfide bond" evidence="1">
    <location>
        <begin position="26"/>
        <end position="38"/>
    </location>
</feature>
<feature type="disulfide bond" evidence="1">
    <location>
        <begin position="32"/>
        <end position="43"/>
    </location>
</feature>
<dbReference type="SMR" id="P0DUG9"/>
<dbReference type="GO" id="GO:0005576">
    <property type="term" value="C:extracellular region"/>
    <property type="evidence" value="ECO:0007669"/>
    <property type="project" value="UniProtKB-SubCell"/>
</dbReference>
<keyword id="KW-0027">Amidation</keyword>
<keyword id="KW-1015">Disulfide bond</keyword>
<keyword id="KW-0964">Secreted</keyword>
<keyword id="KW-0732">Signal</keyword>
<proteinExistence type="inferred from homology"/>
<comment type="function">
    <text evidence="1">Leech salivary gland peptide with unknown function.</text>
</comment>
<comment type="subcellular location">
    <subcellularLocation>
        <location evidence="1">Secreted</location>
    </subcellularLocation>
</comment>
<comment type="tissue specificity">
    <text evidence="1">Expressed in salivary glands. Highly expressed in the head, body and tail with a 2-3-fold higher expression in the head.</text>
</comment>
<comment type="miscellaneous">
    <text evidence="1">Does not show effect on voltage-gated calcium channels, potassium channels, and tetrodotoxin-sensitive sodium channels. Does not show activity on Nav1.7/SCN9A, and shows very weak activity on cation channel TRPA1.</text>
</comment>
<comment type="similarity">
    <text evidence="4">Belongs to the annelide toxin family.</text>
</comment>
<organism>
    <name type="scientific">Haemadipsa sylvestris</name>
    <name type="common">Indian leech</name>
    <dbReference type="NCBI Taxonomy" id="13555"/>
    <lineage>
        <taxon>Eukaryota</taxon>
        <taxon>Metazoa</taxon>
        <taxon>Spiralia</taxon>
        <taxon>Lophotrochozoa</taxon>
        <taxon>Annelida</taxon>
        <taxon>Clitellata</taxon>
        <taxon>Hirudinea</taxon>
        <taxon>Hirudinida</taxon>
        <taxon>Hirudiniformes</taxon>
        <taxon>Haemadipsidae</taxon>
        <taxon>Haemadipsa</taxon>
    </lineage>
</organism>